<feature type="chain" id="PRO_0000373168" description="DNA-directed RNA polymerase RPB3-11 homolog">
    <location>
        <begin position="1"/>
        <end position="359"/>
    </location>
</feature>
<sequence length="359" mass="41449">MEKIFQNVDIKPLLIDFSNPFIKNAAKKLFQLEEQLPLVPVNVMMDFKGINRATVHGLSRVLQDEIPNYMLDIKPGGYKIEDSTDLFMTEQFVRNRINFIPIYAENETLVFALRSLNNSCEVKTIYSRDLIQVAGPKLKYPIFNPTFEIGFLQPGKSLIIEDIYIKKGIGRKHAAFNLAVKTHFSHLDIEQYPTDKKEYMALSGYKQSSMTSDPRHHRLGLCFPAVPLPRINQVVRTYLKNACRVIIGRIQNIQKIYENFEEPQPELVLFSMDEEKTKAIITIKDETHTIGNLLKTCIYEMIPDISFVGYQCIPHKQEMVLTIIHKASQEDLITLLEKSIQNIIQIFQTLEKNIDERIA</sequence>
<evidence type="ECO:0000250" key="1">
    <source>
        <dbReference type="UniProtKB" id="P19387"/>
    </source>
</evidence>
<evidence type="ECO:0000250" key="2">
    <source>
        <dbReference type="UniProtKB" id="Q65184"/>
    </source>
</evidence>
<evidence type="ECO:0000305" key="3"/>
<organismHost>
    <name type="scientific">Ornithodoros</name>
    <name type="common">relapsing fever ticks</name>
    <dbReference type="NCBI Taxonomy" id="6937"/>
</organismHost>
<organismHost>
    <name type="scientific">Phacochoerus aethiopicus</name>
    <name type="common">Warthog</name>
    <dbReference type="NCBI Taxonomy" id="85517"/>
</organismHost>
<organismHost>
    <name type="scientific">Phacochoerus africanus</name>
    <name type="common">Warthog</name>
    <dbReference type="NCBI Taxonomy" id="41426"/>
</organismHost>
<organismHost>
    <name type="scientific">Potamochoerus larvatus</name>
    <name type="common">Bushpig</name>
    <dbReference type="NCBI Taxonomy" id="273792"/>
</organismHost>
<organismHost>
    <name type="scientific">Sus scrofa</name>
    <name type="common">Pig</name>
    <dbReference type="NCBI Taxonomy" id="9823"/>
</organismHost>
<comment type="function">
    <text evidence="1">Component of the DNA-directed RNA polymerase (RNAP) that catalyzes the transcription in the cytoplasm of viral DNA into RNA using the four ribonucleoside triphosphates as substrates.</text>
</comment>
<comment type="subunit">
    <text evidence="2">Part of the viral DNA-directed RNA polymerase that consists of 8 polII-like subunits (RPB1, RPB2, RPB3, RPB5, RPB6, RPB7, RPB9, RPB10), a capping enzyme and a termination factor.</text>
</comment>
<comment type="subcellular location">
    <subcellularLocation>
        <location evidence="3">Host cytoplasm</location>
    </subcellularLocation>
    <subcellularLocation>
        <location evidence="2">Virion</location>
    </subcellularLocation>
    <text evidence="2">Found in association with viral nucleoid.</text>
</comment>
<comment type="induction">
    <text evidence="2">Expressed in the early phase of the viral replicative cycle.</text>
</comment>
<comment type="similarity">
    <text evidence="3">In the N-terminal section; belongs to the archaeal RpoD/eukaryotic RPB3 RNA polymerase subunit family.</text>
</comment>
<comment type="similarity">
    <text evidence="3">In the C-terminal section; belongs to the archaeal RpoL/eukaryotic RPB11/RPC19 RNA polymerase subunit family.</text>
</comment>
<reference key="1">
    <citation type="submission" date="2003-03" db="EMBL/GenBank/DDBJ databases">
        <title>African swine fever virus genomes.</title>
        <authorList>
            <person name="Kutish G.F."/>
            <person name="Rock D.L."/>
        </authorList>
    </citation>
    <scope>NUCLEOTIDE SEQUENCE [LARGE SCALE GENOMIC DNA]</scope>
</reference>
<proteinExistence type="inferred from homology"/>
<accession>P0C9E8</accession>
<name>RPB3_ASFK5</name>
<organism>
    <name type="scientific">African swine fever virus (isolate Pig/Kenya/KEN-50/1950)</name>
    <name type="common">ASFV</name>
    <dbReference type="NCBI Taxonomy" id="561445"/>
    <lineage>
        <taxon>Viruses</taxon>
        <taxon>Varidnaviria</taxon>
        <taxon>Bamfordvirae</taxon>
        <taxon>Nucleocytoviricota</taxon>
        <taxon>Pokkesviricetes</taxon>
        <taxon>Asfuvirales</taxon>
        <taxon>Asfarviridae</taxon>
        <taxon>Asfivirus</taxon>
        <taxon>African swine fever virus</taxon>
    </lineage>
</organism>
<keyword id="KW-0240">DNA-directed RNA polymerase</keyword>
<keyword id="KW-0244">Early protein</keyword>
<keyword id="KW-1035">Host cytoplasm</keyword>
<keyword id="KW-0804">Transcription</keyword>
<keyword id="KW-1195">Viral transcription</keyword>
<keyword id="KW-0946">Virion</keyword>
<dbReference type="EMBL" id="AY261360">
    <property type="status" value="NOT_ANNOTATED_CDS"/>
    <property type="molecule type" value="Genomic_DNA"/>
</dbReference>
<dbReference type="SMR" id="P0C9E8"/>
<dbReference type="Proteomes" id="UP000000861">
    <property type="component" value="Segment"/>
</dbReference>
<dbReference type="GO" id="GO:0000428">
    <property type="term" value="C:DNA-directed RNA polymerase complex"/>
    <property type="evidence" value="ECO:0007669"/>
    <property type="project" value="UniProtKB-KW"/>
</dbReference>
<dbReference type="GO" id="GO:0030430">
    <property type="term" value="C:host cell cytoplasm"/>
    <property type="evidence" value="ECO:0007669"/>
    <property type="project" value="UniProtKB-SubCell"/>
</dbReference>
<dbReference type="GO" id="GO:0044423">
    <property type="term" value="C:virion component"/>
    <property type="evidence" value="ECO:0007669"/>
    <property type="project" value="UniProtKB-KW"/>
</dbReference>
<dbReference type="GO" id="GO:0046983">
    <property type="term" value="F:protein dimerization activity"/>
    <property type="evidence" value="ECO:0007669"/>
    <property type="project" value="InterPro"/>
</dbReference>
<dbReference type="GO" id="GO:0006351">
    <property type="term" value="P:DNA-templated transcription"/>
    <property type="evidence" value="ECO:0007669"/>
    <property type="project" value="InterPro"/>
</dbReference>
<dbReference type="GO" id="GO:0019083">
    <property type="term" value="P:viral transcription"/>
    <property type="evidence" value="ECO:0007669"/>
    <property type="project" value="UniProtKB-KW"/>
</dbReference>
<dbReference type="Gene3D" id="3.30.1360.10">
    <property type="entry name" value="RNA polymerase, RBP11-like subunit"/>
    <property type="match status" value="1"/>
</dbReference>
<dbReference type="InterPro" id="IPR036603">
    <property type="entry name" value="RBP11-like"/>
</dbReference>
<dbReference type="InterPro" id="IPR009025">
    <property type="entry name" value="RBP11-like_dimer"/>
</dbReference>
<dbReference type="InterPro" id="IPR036643">
    <property type="entry name" value="RNApol_insert_sf"/>
</dbReference>
<dbReference type="Pfam" id="PF13656">
    <property type="entry name" value="RNA_pol_L_2"/>
    <property type="match status" value="1"/>
</dbReference>
<dbReference type="SUPFAM" id="SSF56553">
    <property type="entry name" value="Insert subdomain of RNA polymerase alpha subunit"/>
    <property type="match status" value="1"/>
</dbReference>
<dbReference type="SUPFAM" id="SSF55257">
    <property type="entry name" value="RBP11-like subunits of RNA polymerase"/>
    <property type="match status" value="1"/>
</dbReference>
<gene>
    <name type="ordered locus">Ken-125</name>
</gene>
<protein>
    <recommendedName>
        <fullName evidence="2">DNA-directed RNA polymerase RPB3-11 homolog</fullName>
        <shortName evidence="3">RPB3-11 homolog</shortName>
    </recommendedName>
</protein>